<comment type="catalytic activity">
    <reaction evidence="1">
        <text>(R)-glycerate + ATP = (2R)-3-phosphoglycerate + ADP + H(+)</text>
        <dbReference type="Rhea" id="RHEA:23516"/>
        <dbReference type="ChEBI" id="CHEBI:15378"/>
        <dbReference type="ChEBI" id="CHEBI:16659"/>
        <dbReference type="ChEBI" id="CHEBI:30616"/>
        <dbReference type="ChEBI" id="CHEBI:58272"/>
        <dbReference type="ChEBI" id="CHEBI:456216"/>
        <dbReference type="EC" id="2.7.1.31"/>
    </reaction>
</comment>
<comment type="subcellular location">
    <subcellularLocation>
        <location evidence="1">Cytoplasm</location>
    </subcellularLocation>
</comment>
<comment type="similarity">
    <text evidence="2">Belongs to the glycerate kinase type-2 family.</text>
</comment>
<feature type="chain" id="PRO_0000287196" description="Glycerate kinase">
    <location>
        <begin position="1"/>
        <end position="502"/>
    </location>
</feature>
<reference key="1">
    <citation type="submission" date="2006-10" db="EMBL/GenBank/DDBJ databases">
        <authorList>
            <consortium name="NIH - Zebrafish Gene Collection (ZGC) project"/>
        </authorList>
    </citation>
    <scope>NUCLEOTIDE SEQUENCE [LARGE SCALE MRNA]</scope>
    <source>
        <tissue>Ovary</tissue>
    </source>
</reference>
<keyword id="KW-0067">ATP-binding</keyword>
<keyword id="KW-0963">Cytoplasm</keyword>
<keyword id="KW-0418">Kinase</keyword>
<keyword id="KW-0547">Nucleotide-binding</keyword>
<keyword id="KW-1185">Reference proteome</keyword>
<keyword id="KW-0808">Transferase</keyword>
<organism>
    <name type="scientific">Danio rerio</name>
    <name type="common">Zebrafish</name>
    <name type="synonym">Brachydanio rerio</name>
    <dbReference type="NCBI Taxonomy" id="7955"/>
    <lineage>
        <taxon>Eukaryota</taxon>
        <taxon>Metazoa</taxon>
        <taxon>Chordata</taxon>
        <taxon>Craniata</taxon>
        <taxon>Vertebrata</taxon>
        <taxon>Euteleostomi</taxon>
        <taxon>Actinopterygii</taxon>
        <taxon>Neopterygii</taxon>
        <taxon>Teleostei</taxon>
        <taxon>Ostariophysi</taxon>
        <taxon>Cypriniformes</taxon>
        <taxon>Danionidae</taxon>
        <taxon>Danioninae</taxon>
        <taxon>Danio</taxon>
    </lineage>
</organism>
<accession>Q08BL7</accession>
<proteinExistence type="evidence at transcript level"/>
<dbReference type="EC" id="2.7.1.31"/>
<dbReference type="EMBL" id="BC124662">
    <property type="protein sequence ID" value="AAI24663.1"/>
    <property type="molecule type" value="mRNA"/>
</dbReference>
<dbReference type="SMR" id="Q08BL7"/>
<dbReference type="FunCoup" id="Q08BL7">
    <property type="interactions" value="315"/>
</dbReference>
<dbReference type="STRING" id="7955.ENSDARP00000124654"/>
<dbReference type="PaxDb" id="7955-ENSDARP00000124654"/>
<dbReference type="AGR" id="ZFIN:ZDB-GENE-061013-308"/>
<dbReference type="ZFIN" id="ZDB-GENE-061013-308">
    <property type="gene designation" value="glyctk"/>
</dbReference>
<dbReference type="eggNOG" id="KOG3935">
    <property type="taxonomic scope" value="Eukaryota"/>
</dbReference>
<dbReference type="InParanoid" id="Q08BL7"/>
<dbReference type="PhylomeDB" id="Q08BL7"/>
<dbReference type="Reactome" id="R-DRE-70350">
    <property type="pathway name" value="Fructose catabolism"/>
</dbReference>
<dbReference type="PRO" id="PR:Q08BL7"/>
<dbReference type="Proteomes" id="UP000000437">
    <property type="component" value="Unplaced"/>
</dbReference>
<dbReference type="GO" id="GO:0005737">
    <property type="term" value="C:cytoplasm"/>
    <property type="evidence" value="ECO:0000250"/>
    <property type="project" value="UniProtKB"/>
</dbReference>
<dbReference type="GO" id="GO:0005524">
    <property type="term" value="F:ATP binding"/>
    <property type="evidence" value="ECO:0007669"/>
    <property type="project" value="UniProtKB-KW"/>
</dbReference>
<dbReference type="GO" id="GO:0008887">
    <property type="term" value="F:glycerate kinase activity"/>
    <property type="evidence" value="ECO:0000250"/>
    <property type="project" value="UniProtKB"/>
</dbReference>
<dbReference type="GO" id="GO:0006468">
    <property type="term" value="P:protein phosphorylation"/>
    <property type="evidence" value="ECO:0000250"/>
    <property type="project" value="UniProtKB"/>
</dbReference>
<dbReference type="FunFam" id="3.40.50.10180:FF:000001">
    <property type="entry name" value="Glycerate kinase"/>
    <property type="match status" value="1"/>
</dbReference>
<dbReference type="Gene3D" id="3.40.50.10180">
    <property type="entry name" value="Glycerate kinase, MOFRL-like N-terminal domain"/>
    <property type="match status" value="1"/>
</dbReference>
<dbReference type="Gene3D" id="3.40.1480.10">
    <property type="entry name" value="MOFRL domain"/>
    <property type="match status" value="1"/>
</dbReference>
<dbReference type="InterPro" id="IPR037035">
    <property type="entry name" value="GK-like_C_sf"/>
</dbReference>
<dbReference type="InterPro" id="IPR038614">
    <property type="entry name" value="GK_N_sf"/>
</dbReference>
<dbReference type="InterPro" id="IPR007835">
    <property type="entry name" value="MOFRL"/>
</dbReference>
<dbReference type="InterPro" id="IPR025286">
    <property type="entry name" value="MOFRL_assoc_dom"/>
</dbReference>
<dbReference type="InterPro" id="IPR039760">
    <property type="entry name" value="MOFRL_protein"/>
</dbReference>
<dbReference type="PANTHER" id="PTHR12227">
    <property type="entry name" value="GLYCERATE KINASE"/>
    <property type="match status" value="1"/>
</dbReference>
<dbReference type="PANTHER" id="PTHR12227:SF0">
    <property type="entry name" value="GLYCERATE KINASE"/>
    <property type="match status" value="1"/>
</dbReference>
<dbReference type="Pfam" id="PF13660">
    <property type="entry name" value="DUF4147"/>
    <property type="match status" value="1"/>
</dbReference>
<dbReference type="Pfam" id="PF05161">
    <property type="entry name" value="MOFRL"/>
    <property type="match status" value="1"/>
</dbReference>
<dbReference type="SUPFAM" id="SSF82544">
    <property type="entry name" value="GckA/TtuD-like"/>
    <property type="match status" value="1"/>
</dbReference>
<evidence type="ECO:0000250" key="1">
    <source>
        <dbReference type="UniProtKB" id="Q8IVS8"/>
    </source>
</evidence>
<evidence type="ECO:0000305" key="2"/>
<gene>
    <name type="primary">glyctk</name>
    <name type="ORF">zgc:153346</name>
</gene>
<name>GLCTK_DANRE</name>
<sequence length="502" mass="52608">MSSLNTRARAVFSAAVEGVHPDMVVRRGLERHGDKLHVGGQSFTLTNNLYLVGFGKAVLGMAAEAERIVGDHLIKGVVSVPHGIQNTLRSHGKEKMLLESNSRITVMEGAKHNLPDTDAQKSAECIRDLASSLTEKDLLLVLISGGGSALLPAPAPPMSLQEKQDVTRKLAAAGATIQELNTVRRALSLLKGGGLAQCASPAKVVALILSDVIGDPLDLIASGPTVRSDSSPEEVWAILDNYKLSDSLPSSVKEVLSKSISGQGSGVKNQPQEVKDNVLNVVIGSNTIALECASRKASELGLRPVILSPGVCGDVRSVARLYGLLSSFACSPGKEPPPELAAEILKLGPEVGIESWDLCRTMNVLVGERKEGWGATCLLAGGEPTVKLSGKGRGGRNQELAMRVGLELSQGEVKSGAVFLSGGTDGQDGPTEAAGAVADGELKEEAASQGLDTDSFLANNDSFTFFSKLSEGRRLLNPGLTGTNVMDVHVMLLPPSPQKDLQ</sequence>
<protein>
    <recommendedName>
        <fullName>Glycerate kinase</fullName>
        <ecNumber>2.7.1.31</ecNumber>
    </recommendedName>
</protein>